<reference key="1">
    <citation type="journal article" date="1997" name="Genomics">
        <title>Identification, characterization, and precise mapping of a human gene encoding a novel membrane-spanning protein from the 22q11 region deleted in velo-cardio-facial syndrome.</title>
        <authorList>
            <person name="Sirotkin H."/>
            <person name="Morrow B."/>
            <person name="St Jore B."/>
            <person name="Puech A."/>
            <person name="Das Gupta R."/>
            <person name="Patanjali S."/>
            <person name="Skoultchi A."/>
            <person name="Weissman S.M."/>
            <person name="Kucherlapati R."/>
        </authorList>
    </citation>
    <scope>NUCLEOTIDE SEQUENCE [MRNA]</scope>
</reference>
<reference key="2">
    <citation type="journal article" date="2004" name="Genome Biol.">
        <title>A genome annotation-driven approach to cloning the human ORFeome.</title>
        <authorList>
            <person name="Collins J.E."/>
            <person name="Wright C.L."/>
            <person name="Edwards C.A."/>
            <person name="Davis M.P."/>
            <person name="Grinham J.A."/>
            <person name="Cole C.G."/>
            <person name="Goward M.E."/>
            <person name="Aguado B."/>
            <person name="Mallya M."/>
            <person name="Mokrab Y."/>
            <person name="Huckle E.J."/>
            <person name="Beare D.M."/>
            <person name="Dunham I."/>
        </authorList>
    </citation>
    <scope>NUCLEOTIDE SEQUENCE [LARGE SCALE MRNA]</scope>
</reference>
<reference key="3">
    <citation type="journal article" date="2004" name="Nat. Genet.">
        <title>Complete sequencing and characterization of 21,243 full-length human cDNAs.</title>
        <authorList>
            <person name="Ota T."/>
            <person name="Suzuki Y."/>
            <person name="Nishikawa T."/>
            <person name="Otsuki T."/>
            <person name="Sugiyama T."/>
            <person name="Irie R."/>
            <person name="Wakamatsu A."/>
            <person name="Hayashi K."/>
            <person name="Sato H."/>
            <person name="Nagai K."/>
            <person name="Kimura K."/>
            <person name="Makita H."/>
            <person name="Sekine M."/>
            <person name="Obayashi M."/>
            <person name="Nishi T."/>
            <person name="Shibahara T."/>
            <person name="Tanaka T."/>
            <person name="Ishii S."/>
            <person name="Yamamoto J."/>
            <person name="Saito K."/>
            <person name="Kawai Y."/>
            <person name="Isono Y."/>
            <person name="Nakamura Y."/>
            <person name="Nagahari K."/>
            <person name="Murakami K."/>
            <person name="Yasuda T."/>
            <person name="Iwayanagi T."/>
            <person name="Wagatsuma M."/>
            <person name="Shiratori A."/>
            <person name="Sudo H."/>
            <person name="Hosoiri T."/>
            <person name="Kaku Y."/>
            <person name="Kodaira H."/>
            <person name="Kondo H."/>
            <person name="Sugawara M."/>
            <person name="Takahashi M."/>
            <person name="Kanda K."/>
            <person name="Yokoi T."/>
            <person name="Furuya T."/>
            <person name="Kikkawa E."/>
            <person name="Omura Y."/>
            <person name="Abe K."/>
            <person name="Kamihara K."/>
            <person name="Katsuta N."/>
            <person name="Sato K."/>
            <person name="Tanikawa M."/>
            <person name="Yamazaki M."/>
            <person name="Ninomiya K."/>
            <person name="Ishibashi T."/>
            <person name="Yamashita H."/>
            <person name="Murakawa K."/>
            <person name="Fujimori K."/>
            <person name="Tanai H."/>
            <person name="Kimata M."/>
            <person name="Watanabe M."/>
            <person name="Hiraoka S."/>
            <person name="Chiba Y."/>
            <person name="Ishida S."/>
            <person name="Ono Y."/>
            <person name="Takiguchi S."/>
            <person name="Watanabe S."/>
            <person name="Yosida M."/>
            <person name="Hotuta T."/>
            <person name="Kusano J."/>
            <person name="Kanehori K."/>
            <person name="Takahashi-Fujii A."/>
            <person name="Hara H."/>
            <person name="Tanase T.-O."/>
            <person name="Nomura Y."/>
            <person name="Togiya S."/>
            <person name="Komai F."/>
            <person name="Hara R."/>
            <person name="Takeuchi K."/>
            <person name="Arita M."/>
            <person name="Imose N."/>
            <person name="Musashino K."/>
            <person name="Yuuki H."/>
            <person name="Oshima A."/>
            <person name="Sasaki N."/>
            <person name="Aotsuka S."/>
            <person name="Yoshikawa Y."/>
            <person name="Matsunawa H."/>
            <person name="Ichihara T."/>
            <person name="Shiohata N."/>
            <person name="Sano S."/>
            <person name="Moriya S."/>
            <person name="Momiyama H."/>
            <person name="Satoh N."/>
            <person name="Takami S."/>
            <person name="Terashima Y."/>
            <person name="Suzuki O."/>
            <person name="Nakagawa S."/>
            <person name="Senoh A."/>
            <person name="Mizoguchi H."/>
            <person name="Goto Y."/>
            <person name="Shimizu F."/>
            <person name="Wakebe H."/>
            <person name="Hishigaki H."/>
            <person name="Watanabe T."/>
            <person name="Sugiyama A."/>
            <person name="Takemoto M."/>
            <person name="Kawakami B."/>
            <person name="Yamazaki M."/>
            <person name="Watanabe K."/>
            <person name="Kumagai A."/>
            <person name="Itakura S."/>
            <person name="Fukuzumi Y."/>
            <person name="Fujimori Y."/>
            <person name="Komiyama M."/>
            <person name="Tashiro H."/>
            <person name="Tanigami A."/>
            <person name="Fujiwara T."/>
            <person name="Ono T."/>
            <person name="Yamada K."/>
            <person name="Fujii Y."/>
            <person name="Ozaki K."/>
            <person name="Hirao M."/>
            <person name="Ohmori Y."/>
            <person name="Kawabata A."/>
            <person name="Hikiji T."/>
            <person name="Kobatake N."/>
            <person name="Inagaki H."/>
            <person name="Ikema Y."/>
            <person name="Okamoto S."/>
            <person name="Okitani R."/>
            <person name="Kawakami T."/>
            <person name="Noguchi S."/>
            <person name="Itoh T."/>
            <person name="Shigeta K."/>
            <person name="Senba T."/>
            <person name="Matsumura K."/>
            <person name="Nakajima Y."/>
            <person name="Mizuno T."/>
            <person name="Morinaga M."/>
            <person name="Sasaki M."/>
            <person name="Togashi T."/>
            <person name="Oyama M."/>
            <person name="Hata H."/>
            <person name="Watanabe M."/>
            <person name="Komatsu T."/>
            <person name="Mizushima-Sugano J."/>
            <person name="Satoh T."/>
            <person name="Shirai Y."/>
            <person name="Takahashi Y."/>
            <person name="Nakagawa K."/>
            <person name="Okumura K."/>
            <person name="Nagase T."/>
            <person name="Nomura N."/>
            <person name="Kikuchi H."/>
            <person name="Masuho Y."/>
            <person name="Yamashita R."/>
            <person name="Nakai K."/>
            <person name="Yada T."/>
            <person name="Nakamura Y."/>
            <person name="Ohara O."/>
            <person name="Isogai T."/>
            <person name="Sugano S."/>
        </authorList>
    </citation>
    <scope>NUCLEOTIDE SEQUENCE [LARGE SCALE MRNA]</scope>
    <source>
        <tissue>Prostate</tissue>
    </source>
</reference>
<reference key="4">
    <citation type="submission" date="2003-05" db="EMBL/GenBank/DDBJ databases">
        <title>Cloning of human full-length CDSs in BD Creator(TM) system donor vector.</title>
        <authorList>
            <person name="Kalnine N."/>
            <person name="Chen X."/>
            <person name="Rolfs A."/>
            <person name="Halleck A."/>
            <person name="Hines L."/>
            <person name="Eisenstein S."/>
            <person name="Koundinya M."/>
            <person name="Raphael J."/>
            <person name="Moreira D."/>
            <person name="Kelley T."/>
            <person name="LaBaer J."/>
            <person name="Lin Y."/>
            <person name="Phelan M."/>
            <person name="Farmer A."/>
        </authorList>
    </citation>
    <scope>NUCLEOTIDE SEQUENCE [LARGE SCALE MRNA]</scope>
</reference>
<reference key="5">
    <citation type="journal article" date="1999" name="Nature">
        <title>The DNA sequence of human chromosome 22.</title>
        <authorList>
            <person name="Dunham I."/>
            <person name="Hunt A.R."/>
            <person name="Collins J.E."/>
            <person name="Bruskiewich R."/>
            <person name="Beare D.M."/>
            <person name="Clamp M."/>
            <person name="Smink L.J."/>
            <person name="Ainscough R."/>
            <person name="Almeida J.P."/>
            <person name="Babbage A.K."/>
            <person name="Bagguley C."/>
            <person name="Bailey J."/>
            <person name="Barlow K.F."/>
            <person name="Bates K.N."/>
            <person name="Beasley O.P."/>
            <person name="Bird C.P."/>
            <person name="Blakey S.E."/>
            <person name="Bridgeman A.M."/>
            <person name="Buck D."/>
            <person name="Burgess J."/>
            <person name="Burrill W.D."/>
            <person name="Burton J."/>
            <person name="Carder C."/>
            <person name="Carter N.P."/>
            <person name="Chen Y."/>
            <person name="Clark G."/>
            <person name="Clegg S.M."/>
            <person name="Cobley V.E."/>
            <person name="Cole C.G."/>
            <person name="Collier R.E."/>
            <person name="Connor R."/>
            <person name="Conroy D."/>
            <person name="Corby N.R."/>
            <person name="Coville G.J."/>
            <person name="Cox A.V."/>
            <person name="Davis J."/>
            <person name="Dawson E."/>
            <person name="Dhami P.D."/>
            <person name="Dockree C."/>
            <person name="Dodsworth S.J."/>
            <person name="Durbin R.M."/>
            <person name="Ellington A.G."/>
            <person name="Evans K.L."/>
            <person name="Fey J.M."/>
            <person name="Fleming K."/>
            <person name="French L."/>
            <person name="Garner A.A."/>
            <person name="Gilbert J.G.R."/>
            <person name="Goward M.E."/>
            <person name="Grafham D.V."/>
            <person name="Griffiths M.N.D."/>
            <person name="Hall C."/>
            <person name="Hall R.E."/>
            <person name="Hall-Tamlyn G."/>
            <person name="Heathcott R.W."/>
            <person name="Ho S."/>
            <person name="Holmes S."/>
            <person name="Hunt S.E."/>
            <person name="Jones M.C."/>
            <person name="Kershaw J."/>
            <person name="Kimberley A.M."/>
            <person name="King A."/>
            <person name="Laird G.K."/>
            <person name="Langford C.F."/>
            <person name="Leversha M.A."/>
            <person name="Lloyd C."/>
            <person name="Lloyd D.M."/>
            <person name="Martyn I.D."/>
            <person name="Mashreghi-Mohammadi M."/>
            <person name="Matthews L.H."/>
            <person name="Mccann O.T."/>
            <person name="Mcclay J."/>
            <person name="Mclaren S."/>
            <person name="McMurray A.A."/>
            <person name="Milne S.A."/>
            <person name="Mortimore B.J."/>
            <person name="Odell C.N."/>
            <person name="Pavitt R."/>
            <person name="Pearce A.V."/>
            <person name="Pearson D."/>
            <person name="Phillimore B.J.C.T."/>
            <person name="Phillips S.H."/>
            <person name="Plumb R.W."/>
            <person name="Ramsay H."/>
            <person name="Ramsey Y."/>
            <person name="Rogers L."/>
            <person name="Ross M.T."/>
            <person name="Scott C.E."/>
            <person name="Sehra H.K."/>
            <person name="Skuce C.D."/>
            <person name="Smalley S."/>
            <person name="Smith M.L."/>
            <person name="Soderlund C."/>
            <person name="Spragon L."/>
            <person name="Steward C.A."/>
            <person name="Sulston J.E."/>
            <person name="Swann R.M."/>
            <person name="Vaudin M."/>
            <person name="Wall M."/>
            <person name="Wallis J.M."/>
            <person name="Whiteley M.N."/>
            <person name="Willey D.L."/>
            <person name="Williams L."/>
            <person name="Williams S.A."/>
            <person name="Williamson H."/>
            <person name="Wilmer T.E."/>
            <person name="Wilming L."/>
            <person name="Wright C.L."/>
            <person name="Hubbard T."/>
            <person name="Bentley D.R."/>
            <person name="Beck S."/>
            <person name="Rogers J."/>
            <person name="Shimizu N."/>
            <person name="Minoshima S."/>
            <person name="Kawasaki K."/>
            <person name="Sasaki T."/>
            <person name="Asakawa S."/>
            <person name="Kudoh J."/>
            <person name="Shintani A."/>
            <person name="Shibuya K."/>
            <person name="Yoshizaki Y."/>
            <person name="Aoki N."/>
            <person name="Mitsuyama S."/>
            <person name="Roe B.A."/>
            <person name="Chen F."/>
            <person name="Chu L."/>
            <person name="Crabtree J."/>
            <person name="Deschamps S."/>
            <person name="Do A."/>
            <person name="Do T."/>
            <person name="Dorman A."/>
            <person name="Fang F."/>
            <person name="Fu Y."/>
            <person name="Hu P."/>
            <person name="Hua A."/>
            <person name="Kenton S."/>
            <person name="Lai H."/>
            <person name="Lao H.I."/>
            <person name="Lewis J."/>
            <person name="Lewis S."/>
            <person name="Lin S.-P."/>
            <person name="Loh P."/>
            <person name="Malaj E."/>
            <person name="Nguyen T."/>
            <person name="Pan H."/>
            <person name="Phan S."/>
            <person name="Qi S."/>
            <person name="Qian Y."/>
            <person name="Ray L."/>
            <person name="Ren Q."/>
            <person name="Shaull S."/>
            <person name="Sloan D."/>
            <person name="Song L."/>
            <person name="Wang Q."/>
            <person name="Wang Y."/>
            <person name="Wang Z."/>
            <person name="White J."/>
            <person name="Willingham D."/>
            <person name="Wu H."/>
            <person name="Yao Z."/>
            <person name="Zhan M."/>
            <person name="Zhang G."/>
            <person name="Chissoe S."/>
            <person name="Murray J."/>
            <person name="Miller N."/>
            <person name="Minx P."/>
            <person name="Fulton R."/>
            <person name="Johnson D."/>
            <person name="Bemis G."/>
            <person name="Bentley D."/>
            <person name="Bradshaw H."/>
            <person name="Bourne S."/>
            <person name="Cordes M."/>
            <person name="Du Z."/>
            <person name="Fulton L."/>
            <person name="Goela D."/>
            <person name="Graves T."/>
            <person name="Hawkins J."/>
            <person name="Hinds K."/>
            <person name="Kemp K."/>
            <person name="Latreille P."/>
            <person name="Layman D."/>
            <person name="Ozersky P."/>
            <person name="Rohlfing T."/>
            <person name="Scheet P."/>
            <person name="Walker C."/>
            <person name="Wamsley A."/>
            <person name="Wohldmann P."/>
            <person name="Pepin K."/>
            <person name="Nelson J."/>
            <person name="Korf I."/>
            <person name="Bedell J.A."/>
            <person name="Hillier L.W."/>
            <person name="Mardis E."/>
            <person name="Waterston R."/>
            <person name="Wilson R."/>
            <person name="Emanuel B.S."/>
            <person name="Shaikh T."/>
            <person name="Kurahashi H."/>
            <person name="Saitta S."/>
            <person name="Budarf M.L."/>
            <person name="McDermid H.E."/>
            <person name="Johnson A."/>
            <person name="Wong A.C.C."/>
            <person name="Morrow B.E."/>
            <person name="Edelmann L."/>
            <person name="Kim U.J."/>
            <person name="Shizuya H."/>
            <person name="Simon M.I."/>
            <person name="Dumanski J.P."/>
            <person name="Peyrard M."/>
            <person name="Kedra D."/>
            <person name="Seroussi E."/>
            <person name="Fransson I."/>
            <person name="Tapia I."/>
            <person name="Bruder C.E."/>
            <person name="O'Brien K.P."/>
            <person name="Wilkinson P."/>
            <person name="Bodenteich A."/>
            <person name="Hartman K."/>
            <person name="Hu X."/>
            <person name="Khan A.S."/>
            <person name="Lane L."/>
            <person name="Tilahun Y."/>
            <person name="Wright H."/>
        </authorList>
    </citation>
    <scope>NUCLEOTIDE SEQUENCE [LARGE SCALE GENOMIC DNA]</scope>
</reference>
<reference key="6">
    <citation type="journal article" date="2004" name="Genome Res.">
        <title>The status, quality, and expansion of the NIH full-length cDNA project: the Mammalian Gene Collection (MGC).</title>
        <authorList>
            <consortium name="The MGC Project Team"/>
        </authorList>
    </citation>
    <scope>NUCLEOTIDE SEQUENCE [LARGE SCALE MRNA]</scope>
    <source>
        <tissue>Brain</tissue>
        <tissue>Lung</tissue>
    </source>
</reference>
<reference key="7">
    <citation type="journal article" date="2019" name="Cell. Mol. Life Sci.">
        <title>Tight junction proteins at the blood-brain barrier: far more than claudin-5.</title>
        <authorList>
            <person name="Berndt P."/>
            <person name="Winkler L."/>
            <person name="Cording J."/>
            <person name="Breitkreuz-Korff O."/>
            <person name="Rex A."/>
            <person name="Dithmer S."/>
            <person name="Rausch V."/>
            <person name="Blasig R."/>
            <person name="Richter M."/>
            <person name="Sporbert A."/>
            <person name="Wolburg H."/>
            <person name="Blasig I.E."/>
            <person name="Haseloff R.F."/>
        </authorList>
    </citation>
    <scope>SUBCELLULAR LOCATION</scope>
</reference>
<protein>
    <recommendedName>
        <fullName>Claudin-5</fullName>
    </recommendedName>
    <alternativeName>
        <fullName>Transmembrane protein deleted in VCFS</fullName>
        <shortName>TMDVCF</shortName>
    </alternativeName>
</protein>
<dbReference type="EMBL" id="AF000959">
    <property type="protein sequence ID" value="AAC51364.1"/>
    <property type="molecule type" value="mRNA"/>
</dbReference>
<dbReference type="EMBL" id="CR456420">
    <property type="protein sequence ID" value="CAG30306.1"/>
    <property type="molecule type" value="mRNA"/>
</dbReference>
<dbReference type="EMBL" id="AK092561">
    <property type="protein sequence ID" value="BAG52573.1"/>
    <property type="molecule type" value="mRNA"/>
</dbReference>
<dbReference type="EMBL" id="BT007254">
    <property type="protein sequence ID" value="AAP35918.1"/>
    <property type="molecule type" value="mRNA"/>
</dbReference>
<dbReference type="EMBL" id="AC000082">
    <property type="status" value="NOT_ANNOTATED_CDS"/>
    <property type="molecule type" value="Genomic_DNA"/>
</dbReference>
<dbReference type="EMBL" id="BC002404">
    <property type="protein sequence ID" value="AAH02404.1"/>
    <property type="molecule type" value="mRNA"/>
</dbReference>
<dbReference type="EMBL" id="BC019290">
    <property type="protein sequence ID" value="AAH19290.2"/>
    <property type="molecule type" value="mRNA"/>
</dbReference>
<dbReference type="EMBL" id="BC032363">
    <property type="protein sequence ID" value="AAH32363.1"/>
    <property type="molecule type" value="mRNA"/>
</dbReference>
<dbReference type="CCDS" id="CCDS93118.1"/>
<dbReference type="RefSeq" id="NP_001124333.1">
    <property type="nucleotide sequence ID" value="NM_001130861.1"/>
</dbReference>
<dbReference type="RefSeq" id="NP_001349995.1">
    <property type="nucleotide sequence ID" value="NM_001363066.2"/>
</dbReference>
<dbReference type="RefSeq" id="NP_001413331.1">
    <property type="nucleotide sequence ID" value="NM_001426402.1"/>
</dbReference>
<dbReference type="RefSeq" id="NP_003268.2">
    <property type="nucleotide sequence ID" value="NM_003277.3"/>
</dbReference>
<dbReference type="SMR" id="O00501"/>
<dbReference type="BioGRID" id="112977">
    <property type="interactions" value="49"/>
</dbReference>
<dbReference type="FunCoup" id="O00501">
    <property type="interactions" value="371"/>
</dbReference>
<dbReference type="IntAct" id="O00501">
    <property type="interactions" value="36"/>
</dbReference>
<dbReference type="STRING" id="9606.ENSP00000385477"/>
<dbReference type="TCDB" id="1.H.1.1.16">
    <property type="family name" value="the claudin tight junction (claudin1) family"/>
</dbReference>
<dbReference type="iPTMnet" id="O00501"/>
<dbReference type="PhosphoSitePlus" id="O00501"/>
<dbReference type="SwissPalm" id="O00501"/>
<dbReference type="BioMuta" id="CLDN5"/>
<dbReference type="MassIVE" id="O00501"/>
<dbReference type="PaxDb" id="9606-ENSP00000385477"/>
<dbReference type="PeptideAtlas" id="O00501"/>
<dbReference type="ProteomicsDB" id="47945"/>
<dbReference type="ABCD" id="O00501">
    <property type="antibodies" value="13 sequenced antibodies"/>
</dbReference>
<dbReference type="Antibodypedia" id="3615">
    <property type="antibodies" value="481 antibodies from 38 providers"/>
</dbReference>
<dbReference type="DNASU" id="7122"/>
<dbReference type="Ensembl" id="ENST00000618236.2">
    <property type="protein sequence ID" value="ENSP00000480623.1"/>
    <property type="gene ID" value="ENSG00000184113.10"/>
</dbReference>
<dbReference type="GeneID" id="7122"/>
<dbReference type="KEGG" id="hsa:7122"/>
<dbReference type="MANE-Select" id="ENST00000618236.2">
    <property type="protein sequence ID" value="ENSP00000480623.1"/>
    <property type="RefSeq nucleotide sequence ID" value="NM_001363066.2"/>
    <property type="RefSeq protein sequence ID" value="NP_001349995.1"/>
</dbReference>
<dbReference type="UCSC" id="uc062bmp.1">
    <property type="organism name" value="human"/>
</dbReference>
<dbReference type="AGR" id="HGNC:2047"/>
<dbReference type="CTD" id="7122"/>
<dbReference type="DisGeNET" id="7122"/>
<dbReference type="GeneCards" id="CLDN5"/>
<dbReference type="HGNC" id="HGNC:2047">
    <property type="gene designation" value="CLDN5"/>
</dbReference>
<dbReference type="HPA" id="ENSG00000184113">
    <property type="expression patterns" value="Tissue enhanced (adipose tissue, breast, choroid plexus, lung)"/>
</dbReference>
<dbReference type="MalaCards" id="CLDN5"/>
<dbReference type="MIM" id="602101">
    <property type="type" value="gene"/>
</dbReference>
<dbReference type="neXtProt" id="NX_O00501"/>
<dbReference type="OpenTargets" id="ENSG00000184113"/>
<dbReference type="PharmGKB" id="PA26573"/>
<dbReference type="VEuPathDB" id="HostDB:ENSG00000184113"/>
<dbReference type="eggNOG" id="ENOG502QW5D">
    <property type="taxonomic scope" value="Eukaryota"/>
</dbReference>
<dbReference type="GeneTree" id="ENSGT00940000161769"/>
<dbReference type="HOGENOM" id="CLU_076370_1_2_1"/>
<dbReference type="InParanoid" id="O00501"/>
<dbReference type="OrthoDB" id="9423433at2759"/>
<dbReference type="PAN-GO" id="O00501">
    <property type="GO annotations" value="4 GO annotations based on evolutionary models"/>
</dbReference>
<dbReference type="PhylomeDB" id="O00501"/>
<dbReference type="TreeFam" id="TF331936"/>
<dbReference type="PathwayCommons" id="O00501"/>
<dbReference type="Reactome" id="R-HSA-420029">
    <property type="pathway name" value="Tight junction interactions"/>
</dbReference>
<dbReference type="Reactome" id="R-HSA-8935964">
    <property type="pathway name" value="RUNX1 regulates expression of components of tight junctions"/>
</dbReference>
<dbReference type="SignaLink" id="O00501"/>
<dbReference type="SIGNOR" id="O00501"/>
<dbReference type="BioGRID-ORCS" id="7122">
    <property type="hits" value="11 hits in 1145 CRISPR screens"/>
</dbReference>
<dbReference type="ChiTaRS" id="CLDN5">
    <property type="organism name" value="human"/>
</dbReference>
<dbReference type="GeneWiki" id="CLDN5"/>
<dbReference type="GenomeRNAi" id="7122"/>
<dbReference type="Pharos" id="O00501">
    <property type="development level" value="Tbio"/>
</dbReference>
<dbReference type="PRO" id="PR:O00501"/>
<dbReference type="Proteomes" id="UP000005640">
    <property type="component" value="Chromosome 22"/>
</dbReference>
<dbReference type="RNAct" id="O00501">
    <property type="molecule type" value="protein"/>
</dbReference>
<dbReference type="Bgee" id="ENSG00000184113">
    <property type="expression patterns" value="Expressed in right lung and 192 other cell types or tissues"/>
</dbReference>
<dbReference type="ExpressionAtlas" id="O00501">
    <property type="expression patterns" value="baseline and differential"/>
</dbReference>
<dbReference type="GO" id="GO:0016327">
    <property type="term" value="C:apicolateral plasma membrane"/>
    <property type="evidence" value="ECO:0000314"/>
    <property type="project" value="UniProtKB"/>
</dbReference>
<dbReference type="GO" id="GO:0005923">
    <property type="term" value="C:bicellular tight junction"/>
    <property type="evidence" value="ECO:0000314"/>
    <property type="project" value="UniProtKB"/>
</dbReference>
<dbReference type="GO" id="GO:0030054">
    <property type="term" value="C:cell junction"/>
    <property type="evidence" value="ECO:0000304"/>
    <property type="project" value="Reactome"/>
</dbReference>
<dbReference type="GO" id="GO:0005911">
    <property type="term" value="C:cell-cell junction"/>
    <property type="evidence" value="ECO:0000314"/>
    <property type="project" value="UniProtKB"/>
</dbReference>
<dbReference type="GO" id="GO:0016328">
    <property type="term" value="C:lateral plasma membrane"/>
    <property type="evidence" value="ECO:0007669"/>
    <property type="project" value="Ensembl"/>
</dbReference>
<dbReference type="GO" id="GO:0016020">
    <property type="term" value="C:membrane"/>
    <property type="evidence" value="ECO:0000304"/>
    <property type="project" value="UniProtKB"/>
</dbReference>
<dbReference type="GO" id="GO:0033270">
    <property type="term" value="C:paranode region of axon"/>
    <property type="evidence" value="ECO:0007669"/>
    <property type="project" value="Ensembl"/>
</dbReference>
<dbReference type="GO" id="GO:0005886">
    <property type="term" value="C:plasma membrane"/>
    <property type="evidence" value="ECO:0000314"/>
    <property type="project" value="ARUK-UCL"/>
</dbReference>
<dbReference type="GO" id="GO:0043220">
    <property type="term" value="C:Schmidt-Lanterman incisure"/>
    <property type="evidence" value="ECO:0007669"/>
    <property type="project" value="Ensembl"/>
</dbReference>
<dbReference type="GO" id="GO:0070160">
    <property type="term" value="C:tight junction"/>
    <property type="evidence" value="ECO:0000314"/>
    <property type="project" value="ARUK-UCL"/>
</dbReference>
<dbReference type="GO" id="GO:0042802">
    <property type="term" value="F:identical protein binding"/>
    <property type="evidence" value="ECO:0000250"/>
    <property type="project" value="UniProtKB"/>
</dbReference>
<dbReference type="GO" id="GO:0005198">
    <property type="term" value="F:structural molecule activity"/>
    <property type="evidence" value="ECO:0007669"/>
    <property type="project" value="InterPro"/>
</dbReference>
<dbReference type="GO" id="GO:0070830">
    <property type="term" value="P:bicellular tight junction assembly"/>
    <property type="evidence" value="ECO:0000318"/>
    <property type="project" value="GO_Central"/>
</dbReference>
<dbReference type="GO" id="GO:0016338">
    <property type="term" value="P:calcium-independent cell-cell adhesion via plasma membrane cell-adhesion molecules"/>
    <property type="evidence" value="ECO:0000250"/>
    <property type="project" value="UniProtKB"/>
</dbReference>
<dbReference type="GO" id="GO:0007155">
    <property type="term" value="P:cell adhesion"/>
    <property type="evidence" value="ECO:0000318"/>
    <property type="project" value="GO_Central"/>
</dbReference>
<dbReference type="GO" id="GO:0007043">
    <property type="term" value="P:cell-cell junction assembly"/>
    <property type="evidence" value="ECO:0000315"/>
    <property type="project" value="UniProtKB"/>
</dbReference>
<dbReference type="GO" id="GO:1990963">
    <property type="term" value="P:establishment of blood-retinal barrier"/>
    <property type="evidence" value="ECO:0000315"/>
    <property type="project" value="ARUK-UCL"/>
</dbReference>
<dbReference type="GO" id="GO:0060325">
    <property type="term" value="P:face morphogenesis"/>
    <property type="evidence" value="ECO:0000304"/>
    <property type="project" value="UniProtKB"/>
</dbReference>
<dbReference type="GO" id="GO:0007612">
    <property type="term" value="P:learning"/>
    <property type="evidence" value="ECO:0000304"/>
    <property type="project" value="UniProtKB"/>
</dbReference>
<dbReference type="GO" id="GO:0035633">
    <property type="term" value="P:maintenance of blood-brain barrier"/>
    <property type="evidence" value="ECO:0000315"/>
    <property type="project" value="ARUK-UCL"/>
</dbReference>
<dbReference type="GO" id="GO:0042552">
    <property type="term" value="P:myelination"/>
    <property type="evidence" value="ECO:0007669"/>
    <property type="project" value="Ensembl"/>
</dbReference>
<dbReference type="GO" id="GO:0016525">
    <property type="term" value="P:negative regulation of angiogenesis"/>
    <property type="evidence" value="ECO:0000315"/>
    <property type="project" value="ARUK-UCL"/>
</dbReference>
<dbReference type="GO" id="GO:0030336">
    <property type="term" value="P:negative regulation of cell migration"/>
    <property type="evidence" value="ECO:0000315"/>
    <property type="project" value="ARUK-UCL"/>
</dbReference>
<dbReference type="GO" id="GO:0010629">
    <property type="term" value="P:negative regulation of gene expression"/>
    <property type="evidence" value="ECO:0000315"/>
    <property type="project" value="ARUK-UCL"/>
</dbReference>
<dbReference type="GO" id="GO:0043116">
    <property type="term" value="P:negative regulation of vascular permeability"/>
    <property type="evidence" value="ECO:0000315"/>
    <property type="project" value="ARUK-UCL"/>
</dbReference>
<dbReference type="GO" id="GO:0003151">
    <property type="term" value="P:outflow tract morphogenesis"/>
    <property type="evidence" value="ECO:0000304"/>
    <property type="project" value="UniProtKB"/>
</dbReference>
<dbReference type="GO" id="GO:1903348">
    <property type="term" value="P:positive regulation of bicellular tight junction assembly"/>
    <property type="evidence" value="ECO:0000315"/>
    <property type="project" value="ARUK-UCL"/>
</dbReference>
<dbReference type="GO" id="GO:0008284">
    <property type="term" value="P:positive regulation of cell population proliferation"/>
    <property type="evidence" value="ECO:0000315"/>
    <property type="project" value="ARUK-UCL"/>
</dbReference>
<dbReference type="GO" id="GO:1903142">
    <property type="term" value="P:positive regulation of establishment of endothelial barrier"/>
    <property type="evidence" value="ECO:0000315"/>
    <property type="project" value="UniProtKB"/>
</dbReference>
<dbReference type="GO" id="GO:0010628">
    <property type="term" value="P:positive regulation of gene expression"/>
    <property type="evidence" value="ECO:0000315"/>
    <property type="project" value="ARUK-UCL"/>
</dbReference>
<dbReference type="GO" id="GO:0045471">
    <property type="term" value="P:response to ethanol"/>
    <property type="evidence" value="ECO:0007669"/>
    <property type="project" value="Ensembl"/>
</dbReference>
<dbReference type="GO" id="GO:0060021">
    <property type="term" value="P:roof of mouth development"/>
    <property type="evidence" value="ECO:0000304"/>
    <property type="project" value="UniProtKB"/>
</dbReference>
<dbReference type="GO" id="GO:0120192">
    <property type="term" value="P:tight junction assembly"/>
    <property type="evidence" value="ECO:0000250"/>
    <property type="project" value="ARUK-UCL"/>
</dbReference>
<dbReference type="GO" id="GO:0007179">
    <property type="term" value="P:transforming growth factor beta receptor signaling pathway"/>
    <property type="evidence" value="ECO:0000314"/>
    <property type="project" value="UniProtKB"/>
</dbReference>
<dbReference type="FunFam" id="1.20.140.150:FF:000001">
    <property type="entry name" value="Claudin"/>
    <property type="match status" value="1"/>
</dbReference>
<dbReference type="Gene3D" id="1.20.140.150">
    <property type="match status" value="1"/>
</dbReference>
<dbReference type="InterPro" id="IPR006187">
    <property type="entry name" value="Claudin"/>
</dbReference>
<dbReference type="InterPro" id="IPR003551">
    <property type="entry name" value="Claudin5"/>
</dbReference>
<dbReference type="InterPro" id="IPR017974">
    <property type="entry name" value="Claudin_CS"/>
</dbReference>
<dbReference type="InterPro" id="IPR004031">
    <property type="entry name" value="PMP22/EMP/MP20/Claudin"/>
</dbReference>
<dbReference type="PANTHER" id="PTHR12002">
    <property type="entry name" value="CLAUDIN"/>
    <property type="match status" value="1"/>
</dbReference>
<dbReference type="Pfam" id="PF00822">
    <property type="entry name" value="PMP22_Claudin"/>
    <property type="match status" value="1"/>
</dbReference>
<dbReference type="PRINTS" id="PR01077">
    <property type="entry name" value="CLAUDIN"/>
</dbReference>
<dbReference type="PRINTS" id="PR01380">
    <property type="entry name" value="CLAUDIN5"/>
</dbReference>
<dbReference type="PROSITE" id="PS01346">
    <property type="entry name" value="CLAUDIN"/>
    <property type="match status" value="1"/>
</dbReference>
<proteinExistence type="evidence at protein level"/>
<gene>
    <name type="primary">CLDN5</name>
    <name type="synonym">AWAL</name>
    <name type="synonym">TMVCF</name>
</gene>
<evidence type="ECO:0000250" key="1"/>
<evidence type="ECO:0000250" key="2">
    <source>
        <dbReference type="UniProtKB" id="O54942"/>
    </source>
</evidence>
<evidence type="ECO:0000255" key="3"/>
<evidence type="ECO:0000269" key="4">
    <source>
    </source>
</evidence>
<evidence type="ECO:0000305" key="5"/>
<organism>
    <name type="scientific">Homo sapiens</name>
    <name type="common">Human</name>
    <dbReference type="NCBI Taxonomy" id="9606"/>
    <lineage>
        <taxon>Eukaryota</taxon>
        <taxon>Metazoa</taxon>
        <taxon>Chordata</taxon>
        <taxon>Craniata</taxon>
        <taxon>Vertebrata</taxon>
        <taxon>Euteleostomi</taxon>
        <taxon>Mammalia</taxon>
        <taxon>Eutheria</taxon>
        <taxon>Euarchontoglires</taxon>
        <taxon>Primates</taxon>
        <taxon>Haplorrhini</taxon>
        <taxon>Catarrhini</taxon>
        <taxon>Hominidae</taxon>
        <taxon>Homo</taxon>
    </lineage>
</organism>
<keyword id="KW-0965">Cell junction</keyword>
<keyword id="KW-1003">Cell membrane</keyword>
<keyword id="KW-0472">Membrane</keyword>
<keyword id="KW-1267">Proteomics identification</keyword>
<keyword id="KW-1185">Reference proteome</keyword>
<keyword id="KW-0796">Tight junction</keyword>
<keyword id="KW-0812">Transmembrane</keyword>
<keyword id="KW-1133">Transmembrane helix</keyword>
<comment type="function">
    <text evidence="1">Plays a major role in tight junction-specific obliteration of the intercellular space.</text>
</comment>
<comment type="subunit">
    <text evidence="1">Directly interacts with TJP1/ZO-1, TJP2/ZO-2 and TJP3/ZO-3. Interacts with MPDZ (By similarity).</text>
</comment>
<comment type="interaction">
    <interactant intactId="EBI-18400628">
        <id>O00501</id>
    </interactant>
    <interactant intactId="EBI-745213">
        <id>P29972</id>
        <label>AQP1</label>
    </interactant>
    <organismsDiffer>false</organismsDiffer>
    <experiments>3</experiments>
</comment>
<comment type="interaction">
    <interactant intactId="EBI-18400628">
        <id>O00501</id>
    </interactant>
    <interactant intactId="EBI-17442596">
        <id>Q6UX41-6</id>
        <label>BTNL8</label>
    </interactant>
    <organismsDiffer>false</organismsDiffer>
    <experiments>3</experiments>
</comment>
<comment type="interaction">
    <interactant intactId="EBI-18400628">
        <id>O00501</id>
    </interactant>
    <interactant intactId="EBI-9083477">
        <id>Q9P0B6</id>
        <label>CCDC167</label>
    </interactant>
    <organismsDiffer>false</organismsDiffer>
    <experiments>3</experiments>
</comment>
<comment type="interaction">
    <interactant intactId="EBI-18400628">
        <id>O00501</id>
    </interactant>
    <interactant intactId="EBI-12813623">
        <id>A0PK11</id>
        <label>CLRN2</label>
    </interactant>
    <organismsDiffer>false</organismsDiffer>
    <experiments>3</experiments>
</comment>
<comment type="interaction">
    <interactant intactId="EBI-18400628">
        <id>O00501</id>
    </interactant>
    <interactant intactId="EBI-2835965">
        <id>Q9BT09</id>
        <label>CNPY3</label>
    </interactant>
    <organismsDiffer>false</organismsDiffer>
    <experiments>3</experiments>
</comment>
<comment type="interaction">
    <interactant intactId="EBI-18400628">
        <id>O00501</id>
    </interactant>
    <interactant intactId="EBI-17876114">
        <id>Q9Y5Q5</id>
        <label>CORIN</label>
    </interactant>
    <organismsDiffer>false</organismsDiffer>
    <experiments>3</experiments>
</comment>
<comment type="interaction">
    <interactant intactId="EBI-18400628">
        <id>O00501</id>
    </interactant>
    <interactant intactId="EBI-7883667">
        <id>P40313</id>
        <label>CTRL</label>
    </interactant>
    <organismsDiffer>false</organismsDiffer>
    <experiments>3</experiments>
</comment>
<comment type="interaction">
    <interactant intactId="EBI-18400628">
        <id>O00501</id>
    </interactant>
    <interactant intactId="EBI-3911467">
        <id>Q07325</id>
        <label>CXCL9</label>
    </interactant>
    <organismsDiffer>false</organismsDiffer>
    <experiments>3</experiments>
</comment>
<comment type="interaction">
    <interactant intactId="EBI-18400628">
        <id>O00501</id>
    </interactant>
    <interactant intactId="EBI-10269179">
        <id>Q8NBI2</id>
        <label>CYB561A3</label>
    </interactant>
    <organismsDiffer>false</organismsDiffer>
    <experiments>3</experiments>
</comment>
<comment type="interaction">
    <interactant intactId="EBI-18400628">
        <id>O00501</id>
    </interactant>
    <interactant intactId="EBI-1753674">
        <id>P52803</id>
        <label>EFNA5</label>
    </interactant>
    <organismsDiffer>false</organismsDiffer>
    <experiments>3</experiments>
</comment>
<comment type="interaction">
    <interactant intactId="EBI-18400628">
        <id>O00501</id>
    </interactant>
    <interactant intactId="EBI-2339219">
        <id>Q08426</id>
        <label>EHHADH</label>
    </interactant>
    <organismsDiffer>false</organismsDiffer>
    <experiments>3</experiments>
</comment>
<comment type="interaction">
    <interactant intactId="EBI-18400628">
        <id>O00501</id>
    </interactant>
    <interactant intactId="EBI-711490">
        <id>Q9UKR5</id>
        <label>ERG28</label>
    </interactant>
    <organismsDiffer>false</organismsDiffer>
    <experiments>3</experiments>
</comment>
<comment type="interaction">
    <interactant intactId="EBI-18400628">
        <id>O00501</id>
    </interactant>
    <interactant intactId="EBI-10976398">
        <id>Q7Z2K6</id>
        <label>ERMP1</label>
    </interactant>
    <organismsDiffer>false</organismsDiffer>
    <experiments>3</experiments>
</comment>
<comment type="interaction">
    <interactant intactId="EBI-18400628">
        <id>O00501</id>
    </interactant>
    <interactant intactId="EBI-702665">
        <id>P02724</id>
        <label>GYPA</label>
    </interactant>
    <organismsDiffer>false</organismsDiffer>
    <experiments>3</experiments>
</comment>
<comment type="interaction">
    <interactant intactId="EBI-18400628">
        <id>O00501</id>
    </interactant>
    <interactant intactId="EBI-8070286">
        <id>O43561-2</id>
        <label>LAT</label>
    </interactant>
    <organismsDiffer>false</organismsDiffer>
    <experiments>3</experiments>
</comment>
<comment type="interaction">
    <interactant intactId="EBI-18400628">
        <id>O00501</id>
    </interactant>
    <interactant intactId="EBI-2820517">
        <id>Q8TAF8</id>
        <label>LHFPL5</label>
    </interactant>
    <organismsDiffer>false</organismsDiffer>
    <experiments>3</experiments>
</comment>
<comment type="interaction">
    <interactant intactId="EBI-18400628">
        <id>O00501</id>
    </interactant>
    <interactant intactId="EBI-8449636">
        <id>P30301</id>
        <label>MIP</label>
    </interactant>
    <organismsDiffer>false</organismsDiffer>
    <experiments>3</experiments>
</comment>
<comment type="interaction">
    <interactant intactId="EBI-18400628">
        <id>O00501</id>
    </interactant>
    <interactant intactId="EBI-608347">
        <id>Q04941</id>
        <label>PLP2</label>
    </interactant>
    <organismsDiffer>false</organismsDiffer>
    <experiments>3</experiments>
</comment>
<comment type="interaction">
    <interactant intactId="EBI-18400628">
        <id>O00501</id>
    </interactant>
    <interactant intactId="EBI-12955265">
        <id>Q96GM1</id>
        <label>PLPPR2</label>
    </interactant>
    <organismsDiffer>false</organismsDiffer>
    <experiments>3</experiments>
</comment>
<comment type="interaction">
    <interactant intactId="EBI-18400628">
        <id>O00501</id>
    </interactant>
    <interactant intactId="EBI-2845982">
        <id>Q01453</id>
        <label>PMP22</label>
    </interactant>
    <organismsDiffer>false</organismsDiffer>
    <experiments>3</experiments>
</comment>
<comment type="interaction">
    <interactant intactId="EBI-18400628">
        <id>O00501</id>
    </interactant>
    <interactant intactId="EBI-1052363">
        <id>Q9NS64</id>
        <label>RPRM</label>
    </interactant>
    <organismsDiffer>false</organismsDiffer>
    <experiments>3</experiments>
</comment>
<comment type="interaction">
    <interactant intactId="EBI-18400628">
        <id>O00501</id>
    </interactant>
    <interactant intactId="EBI-10197617">
        <id>P11686</id>
        <label>SFTPC</label>
    </interactant>
    <organismsDiffer>false</organismsDiffer>
    <experiments>3</experiments>
</comment>
<comment type="interaction">
    <interactant intactId="EBI-18400628">
        <id>O00501</id>
    </interactant>
    <interactant intactId="EBI-5357343">
        <id>Q13326</id>
        <label>SGCG</label>
    </interactant>
    <organismsDiffer>false</organismsDiffer>
    <experiments>3</experiments>
</comment>
<comment type="interaction">
    <interactant intactId="EBI-18400628">
        <id>O00501</id>
    </interactant>
    <interactant intactId="EBI-10281213">
        <id>Q969S0</id>
        <label>SLC35B4</label>
    </interactant>
    <organismsDiffer>false</organismsDiffer>
    <experiments>3</experiments>
</comment>
<comment type="interaction">
    <interactant intactId="EBI-18400628">
        <id>O00501</id>
    </interactant>
    <interactant intactId="EBI-741850">
        <id>Q9BZL3</id>
        <label>SMIM3</label>
    </interactant>
    <organismsDiffer>false</organismsDiffer>
    <experiments>3</experiments>
</comment>
<comment type="interaction">
    <interactant intactId="EBI-18400628">
        <id>O00501</id>
    </interactant>
    <interactant intactId="EBI-2877718">
        <id>Q9NZ01</id>
        <label>TECR</label>
    </interactant>
    <organismsDiffer>false</organismsDiffer>
    <experiments>3</experiments>
</comment>
<comment type="interaction">
    <interactant intactId="EBI-18400628">
        <id>O00501</id>
    </interactant>
    <interactant intactId="EBI-714319">
        <id>P02787</id>
        <label>TF</label>
    </interactant>
    <organismsDiffer>false</organismsDiffer>
    <experiments>3</experiments>
</comment>
<comment type="interaction">
    <interactant intactId="EBI-18400628">
        <id>O00501</id>
    </interactant>
    <interactant intactId="EBI-10694905">
        <id>Q5BJH2-2</id>
        <label>TMEM128</label>
    </interactant>
    <organismsDiffer>false</organismsDiffer>
    <experiments>3</experiments>
</comment>
<comment type="interaction">
    <interactant intactId="EBI-18400628">
        <id>O00501</id>
    </interactant>
    <interactant intactId="EBI-2844246">
        <id>Q9NV12</id>
        <label>TMEM140</label>
    </interactant>
    <organismsDiffer>false</organismsDiffer>
    <experiments>3</experiments>
</comment>
<comment type="interaction">
    <interactant intactId="EBI-18400628">
        <id>O00501</id>
    </interactant>
    <interactant intactId="EBI-2339195">
        <id>Q9P0S9</id>
        <label>TMEM14C</label>
    </interactant>
    <organismsDiffer>false</organismsDiffer>
    <experiments>3</experiments>
</comment>
<comment type="interaction">
    <interactant intactId="EBI-18400628">
        <id>O00501</id>
    </interactant>
    <interactant intactId="EBI-10255122">
        <id>Q6ZP80</id>
        <label>TMEM182</label>
    </interactant>
    <organismsDiffer>false</organismsDiffer>
    <experiments>3</experiments>
</comment>
<comment type="interaction">
    <interactant intactId="EBI-18400628">
        <id>O00501</id>
    </interactant>
    <interactant intactId="EBI-10278423">
        <id>Q8WZ59</id>
        <label>TMEM190</label>
    </interactant>
    <organismsDiffer>false</organismsDiffer>
    <experiments>3</experiments>
</comment>
<comment type="interaction">
    <interactant intactId="EBI-18400628">
        <id>O00501</id>
    </interactant>
    <interactant intactId="EBI-347385">
        <id>Q9H0R3</id>
        <label>TMEM222</label>
    </interactant>
    <organismsDiffer>false</organismsDiffer>
    <experiments>3</experiments>
</comment>
<comment type="interaction">
    <interactant intactId="EBI-18400628">
        <id>O00501</id>
    </interactant>
    <interactant intactId="EBI-3914288">
        <id>O60636</id>
        <label>TSPAN2</label>
    </interactant>
    <organismsDiffer>false</organismsDiffer>
    <experiments>3</experiments>
</comment>
<comment type="interaction">
    <interactant intactId="EBI-18400628">
        <id>O00501</id>
    </interactant>
    <interactant intactId="EBI-10191195">
        <id>O95183</id>
        <label>VAMP5</label>
    </interactant>
    <organismsDiffer>false</organismsDiffer>
    <experiments>3</experiments>
</comment>
<comment type="interaction">
    <interactant intactId="EBI-18400628">
        <id>O00501</id>
    </interactant>
    <interactant intactId="EBI-7850136">
        <id>Q9Y548</id>
        <label>YIPF1</label>
    </interactant>
    <organismsDiffer>false</organismsDiffer>
    <experiments>3</experiments>
</comment>
<comment type="subcellular location">
    <subcellularLocation>
        <location evidence="4">Cell junction</location>
        <location evidence="4">Tight junction</location>
    </subcellularLocation>
    <subcellularLocation>
        <location evidence="2">Cell membrane</location>
        <topology evidence="3">Multi-pass membrane protein</topology>
    </subcellularLocation>
</comment>
<comment type="similarity">
    <text evidence="5">Belongs to the claudin family.</text>
</comment>
<feature type="chain" id="PRO_0000144745" description="Claudin-5">
    <location>
        <begin position="1"/>
        <end position="218"/>
    </location>
</feature>
<feature type="topological domain" description="Cytoplasmic" evidence="3">
    <location>
        <begin position="1"/>
        <end position="7"/>
    </location>
</feature>
<feature type="transmembrane region" description="Helical" evidence="3">
    <location>
        <begin position="8"/>
        <end position="28"/>
    </location>
</feature>
<feature type="topological domain" description="Extracellular" evidence="3">
    <location>
        <begin position="29"/>
        <end position="81"/>
    </location>
</feature>
<feature type="transmembrane region" description="Helical" evidence="3">
    <location>
        <begin position="82"/>
        <end position="102"/>
    </location>
</feature>
<feature type="topological domain" description="Cytoplasmic" evidence="3">
    <location>
        <begin position="103"/>
        <end position="122"/>
    </location>
</feature>
<feature type="transmembrane region" description="Helical" evidence="3">
    <location>
        <begin position="123"/>
        <end position="143"/>
    </location>
</feature>
<feature type="topological domain" description="Extracellular" evidence="3">
    <location>
        <begin position="144"/>
        <end position="159"/>
    </location>
</feature>
<feature type="transmembrane region" description="Helical" evidence="3">
    <location>
        <begin position="160"/>
        <end position="180"/>
    </location>
</feature>
<feature type="topological domain" description="Cytoplasmic" evidence="3">
    <location>
        <begin position="181"/>
        <end position="218"/>
    </location>
</feature>
<feature type="region of interest" description="Interactions with TJP1, TJP2 and TJP3" evidence="1">
    <location>
        <begin position="217"/>
        <end position="218"/>
    </location>
</feature>
<accession>O00501</accession>
<accession>B3KS11</accession>
<accession>Q53XW2</accession>
<accession>Q8WUW3</accession>
<name>CLD5_HUMAN</name>
<sequence>MGSAALEILGLVLCLVGWGGLILACGLPMWQVTAFLDHNIVTAQTTWKGLWMSCVVQSTGHMQCKVYDSVLALSTEVQAARALTVSAVLLAFVALFVTLAGAQCTTCVAPGPAKARVALTGGVLYLFCGLLALVPLCWFANIVVREFYDPSVPVSQKYELGAALYIGWAATALLMVGGCLLCCGAWVCTGRPDLSFPVKYSAPRRPTATGDYDKKNYV</sequence>